<name>GLPK_THEBO</name>
<keyword id="KW-0067">ATP-binding</keyword>
<keyword id="KW-0319">Glycerol metabolism</keyword>
<keyword id="KW-0418">Kinase</keyword>
<keyword id="KW-0547">Nucleotide-binding</keyword>
<keyword id="KW-0808">Transferase</keyword>
<comment type="function">
    <text evidence="1">Key enzyme in the regulation of glycerol uptake and metabolism. Catalyzes the phosphorylation of glycerol to yield sn-glycerol 3-phosphate.</text>
</comment>
<comment type="catalytic activity">
    <reaction evidence="1">
        <text>glycerol + ATP = sn-glycerol 3-phosphate + ADP + H(+)</text>
        <dbReference type="Rhea" id="RHEA:21644"/>
        <dbReference type="ChEBI" id="CHEBI:15378"/>
        <dbReference type="ChEBI" id="CHEBI:17754"/>
        <dbReference type="ChEBI" id="CHEBI:30616"/>
        <dbReference type="ChEBI" id="CHEBI:57597"/>
        <dbReference type="ChEBI" id="CHEBI:456216"/>
        <dbReference type="EC" id="2.7.1.30"/>
    </reaction>
</comment>
<comment type="activity regulation">
    <text evidence="1">Inhibited by fructose 1,6-bisphosphate (FBP).</text>
</comment>
<comment type="pathway">
    <text evidence="1">Polyol metabolism; glycerol degradation via glycerol kinase pathway; sn-glycerol 3-phosphate from glycerol: step 1/1.</text>
</comment>
<comment type="similarity">
    <text evidence="1">Belongs to the FGGY kinase family.</text>
</comment>
<organism>
    <name type="scientific">Thermus brockianus</name>
    <dbReference type="NCBI Taxonomy" id="56956"/>
    <lineage>
        <taxon>Bacteria</taxon>
        <taxon>Thermotogati</taxon>
        <taxon>Deinococcota</taxon>
        <taxon>Deinococci</taxon>
        <taxon>Thermales</taxon>
        <taxon>Thermaceae</taxon>
        <taxon>Thermus</taxon>
    </lineage>
</organism>
<sequence length="495" mass="53534">MKYLLALDQGTTSSWAILFTLEGEVVAVAQRAFAQHYPEPGLVEHDPWEIWESQLWAAKEALRRAGVGPEAVLALGIANQRETTLVWERDTGRPLHPAIVWQDRRTASLCEALRERGLEGLFRARTGLLLDPYFSATKLLWLLERVPGLRERAERGEVCFGTVDTWLLWNLTGGRVHATDPTNASRTLLFHLETLTWDEELLRVLGIPKALLPEVRPSDGDFGETLPGLLGAPIPIRGVLGDQQAALLGQAALGAGEGKCTYGTGAFLLLNTGERPVWAEGGLLTTLAWHLEGKAAYALEGSVFVAGAAVGWLREVGLLGESHEVESLARQVEDAGGVYFVPAFTGLGAPHWDPYARGAILGLTRGTTRAHLARAALEGVAFSVGEVAWAMAGAAGLGLKALKADGGMAQNDLFLEIQADLLGVPVLRPRVTETTALGAAWARGIGAGALSLGDLPALWREEARFLPRMPEARREALYRGWRRAVERAKGWVQEG</sequence>
<feature type="chain" id="PRO_0000059515" description="Glycerol kinase">
    <location>
        <begin position="1"/>
        <end position="495"/>
    </location>
</feature>
<feature type="binding site" evidence="1">
    <location>
        <position position="11"/>
    </location>
    <ligand>
        <name>ADP</name>
        <dbReference type="ChEBI" id="CHEBI:456216"/>
    </ligand>
</feature>
<feature type="binding site" evidence="1">
    <location>
        <position position="11"/>
    </location>
    <ligand>
        <name>ATP</name>
        <dbReference type="ChEBI" id="CHEBI:30616"/>
    </ligand>
</feature>
<feature type="binding site" evidence="1">
    <location>
        <position position="11"/>
    </location>
    <ligand>
        <name>sn-glycerol 3-phosphate</name>
        <dbReference type="ChEBI" id="CHEBI:57597"/>
    </ligand>
</feature>
<feature type="binding site" evidence="1">
    <location>
        <position position="12"/>
    </location>
    <ligand>
        <name>ATP</name>
        <dbReference type="ChEBI" id="CHEBI:30616"/>
    </ligand>
</feature>
<feature type="binding site" evidence="1">
    <location>
        <position position="13"/>
    </location>
    <ligand>
        <name>ATP</name>
        <dbReference type="ChEBI" id="CHEBI:30616"/>
    </ligand>
</feature>
<feature type="binding site" evidence="1">
    <location>
        <position position="81"/>
    </location>
    <ligand>
        <name>glycerol</name>
        <dbReference type="ChEBI" id="CHEBI:17754"/>
    </ligand>
</feature>
<feature type="binding site" evidence="1">
    <location>
        <position position="81"/>
    </location>
    <ligand>
        <name>sn-glycerol 3-phosphate</name>
        <dbReference type="ChEBI" id="CHEBI:57597"/>
    </ligand>
</feature>
<feature type="binding site" evidence="1">
    <location>
        <position position="82"/>
    </location>
    <ligand>
        <name>glycerol</name>
        <dbReference type="ChEBI" id="CHEBI:17754"/>
    </ligand>
</feature>
<feature type="binding site" evidence="1">
    <location>
        <position position="82"/>
    </location>
    <ligand>
        <name>sn-glycerol 3-phosphate</name>
        <dbReference type="ChEBI" id="CHEBI:57597"/>
    </ligand>
</feature>
<feature type="binding site" evidence="1">
    <location>
        <position position="133"/>
    </location>
    <ligand>
        <name>glycerol</name>
        <dbReference type="ChEBI" id="CHEBI:17754"/>
    </ligand>
</feature>
<feature type="binding site" evidence="1">
    <location>
        <position position="133"/>
    </location>
    <ligand>
        <name>sn-glycerol 3-phosphate</name>
        <dbReference type="ChEBI" id="CHEBI:57597"/>
    </ligand>
</feature>
<feature type="binding site" evidence="1">
    <location>
        <position position="242"/>
    </location>
    <ligand>
        <name>glycerol</name>
        <dbReference type="ChEBI" id="CHEBI:17754"/>
    </ligand>
</feature>
<feature type="binding site" evidence="1">
    <location>
        <position position="242"/>
    </location>
    <ligand>
        <name>sn-glycerol 3-phosphate</name>
        <dbReference type="ChEBI" id="CHEBI:57597"/>
    </ligand>
</feature>
<feature type="binding site" evidence="1">
    <location>
        <position position="243"/>
    </location>
    <ligand>
        <name>glycerol</name>
        <dbReference type="ChEBI" id="CHEBI:17754"/>
    </ligand>
</feature>
<feature type="binding site" evidence="1">
    <location>
        <position position="264"/>
    </location>
    <ligand>
        <name>ADP</name>
        <dbReference type="ChEBI" id="CHEBI:456216"/>
    </ligand>
</feature>
<feature type="binding site" evidence="1">
    <location>
        <position position="264"/>
    </location>
    <ligand>
        <name>ATP</name>
        <dbReference type="ChEBI" id="CHEBI:30616"/>
    </ligand>
</feature>
<feature type="binding site" evidence="1">
    <location>
        <position position="307"/>
    </location>
    <ligand>
        <name>ADP</name>
        <dbReference type="ChEBI" id="CHEBI:456216"/>
    </ligand>
</feature>
<feature type="binding site" evidence="1">
    <location>
        <position position="307"/>
    </location>
    <ligand>
        <name>ATP</name>
        <dbReference type="ChEBI" id="CHEBI:30616"/>
    </ligand>
</feature>
<feature type="binding site" evidence="1">
    <location>
        <position position="407"/>
    </location>
    <ligand>
        <name>ADP</name>
        <dbReference type="ChEBI" id="CHEBI:456216"/>
    </ligand>
</feature>
<feature type="binding site" evidence="1">
    <location>
        <position position="407"/>
    </location>
    <ligand>
        <name>ATP</name>
        <dbReference type="ChEBI" id="CHEBI:30616"/>
    </ligand>
</feature>
<feature type="binding site" evidence="1">
    <location>
        <position position="411"/>
    </location>
    <ligand>
        <name>ADP</name>
        <dbReference type="ChEBI" id="CHEBI:456216"/>
    </ligand>
</feature>
<protein>
    <recommendedName>
        <fullName evidence="1">Glycerol kinase</fullName>
        <ecNumber evidence="1">2.7.1.30</ecNumber>
    </recommendedName>
    <alternativeName>
        <fullName evidence="1">ATP:glycerol 3-phosphotransferase</fullName>
    </alternativeName>
    <alternativeName>
        <fullName evidence="1">Glycerokinase</fullName>
        <shortName evidence="1">GK</shortName>
    </alternativeName>
</protein>
<dbReference type="EC" id="2.7.1.30" evidence="1"/>
<dbReference type="EMBL" id="AF135398">
    <property type="protein sequence ID" value="AAD33670.1"/>
    <property type="molecule type" value="Genomic_DNA"/>
</dbReference>
<dbReference type="SMR" id="Q9X6C9"/>
<dbReference type="STRING" id="56956.A0O31_01576"/>
<dbReference type="UniPathway" id="UPA00618">
    <property type="reaction ID" value="UER00672"/>
</dbReference>
<dbReference type="GO" id="GO:0005829">
    <property type="term" value="C:cytosol"/>
    <property type="evidence" value="ECO:0007669"/>
    <property type="project" value="TreeGrafter"/>
</dbReference>
<dbReference type="GO" id="GO:0005524">
    <property type="term" value="F:ATP binding"/>
    <property type="evidence" value="ECO:0007669"/>
    <property type="project" value="UniProtKB-UniRule"/>
</dbReference>
<dbReference type="GO" id="GO:0004370">
    <property type="term" value="F:glycerol kinase activity"/>
    <property type="evidence" value="ECO:0000250"/>
    <property type="project" value="UniProtKB"/>
</dbReference>
<dbReference type="GO" id="GO:0019563">
    <property type="term" value="P:glycerol catabolic process"/>
    <property type="evidence" value="ECO:0007669"/>
    <property type="project" value="UniProtKB-UniRule"/>
</dbReference>
<dbReference type="GO" id="GO:0006071">
    <property type="term" value="P:glycerol metabolic process"/>
    <property type="evidence" value="ECO:0000250"/>
    <property type="project" value="UniProtKB"/>
</dbReference>
<dbReference type="GO" id="GO:0006072">
    <property type="term" value="P:glycerol-3-phosphate metabolic process"/>
    <property type="evidence" value="ECO:0007669"/>
    <property type="project" value="InterPro"/>
</dbReference>
<dbReference type="CDD" id="cd07769">
    <property type="entry name" value="ASKHA_NBD_FGGY_GK"/>
    <property type="match status" value="1"/>
</dbReference>
<dbReference type="FunFam" id="3.30.420.40:FF:000008">
    <property type="entry name" value="Glycerol kinase"/>
    <property type="match status" value="1"/>
</dbReference>
<dbReference type="FunFam" id="3.30.420.40:FF:000108">
    <property type="entry name" value="Glycerol kinase, glycosomal"/>
    <property type="match status" value="1"/>
</dbReference>
<dbReference type="Gene3D" id="3.30.420.40">
    <property type="match status" value="2"/>
</dbReference>
<dbReference type="HAMAP" id="MF_00186">
    <property type="entry name" value="Glycerol_kin"/>
    <property type="match status" value="1"/>
</dbReference>
<dbReference type="InterPro" id="IPR043129">
    <property type="entry name" value="ATPase_NBD"/>
</dbReference>
<dbReference type="InterPro" id="IPR000577">
    <property type="entry name" value="Carb_kinase_FGGY"/>
</dbReference>
<dbReference type="InterPro" id="IPR018483">
    <property type="entry name" value="Carb_kinase_FGGY_CS"/>
</dbReference>
<dbReference type="InterPro" id="IPR018485">
    <property type="entry name" value="FGGY_C"/>
</dbReference>
<dbReference type="InterPro" id="IPR018484">
    <property type="entry name" value="FGGY_N"/>
</dbReference>
<dbReference type="InterPro" id="IPR005999">
    <property type="entry name" value="Glycerol_kin"/>
</dbReference>
<dbReference type="NCBIfam" id="TIGR01311">
    <property type="entry name" value="glycerol_kin"/>
    <property type="match status" value="1"/>
</dbReference>
<dbReference type="NCBIfam" id="NF000756">
    <property type="entry name" value="PRK00047.1"/>
    <property type="match status" value="1"/>
</dbReference>
<dbReference type="PANTHER" id="PTHR10196:SF69">
    <property type="entry name" value="GLYCEROL KINASE"/>
    <property type="match status" value="1"/>
</dbReference>
<dbReference type="PANTHER" id="PTHR10196">
    <property type="entry name" value="SUGAR KINASE"/>
    <property type="match status" value="1"/>
</dbReference>
<dbReference type="Pfam" id="PF02782">
    <property type="entry name" value="FGGY_C"/>
    <property type="match status" value="1"/>
</dbReference>
<dbReference type="Pfam" id="PF00370">
    <property type="entry name" value="FGGY_N"/>
    <property type="match status" value="1"/>
</dbReference>
<dbReference type="PIRSF" id="PIRSF000538">
    <property type="entry name" value="GlpK"/>
    <property type="match status" value="1"/>
</dbReference>
<dbReference type="SUPFAM" id="SSF53067">
    <property type="entry name" value="Actin-like ATPase domain"/>
    <property type="match status" value="2"/>
</dbReference>
<dbReference type="PROSITE" id="PS00445">
    <property type="entry name" value="FGGY_KINASES_2"/>
    <property type="match status" value="1"/>
</dbReference>
<accession>Q9X6C9</accession>
<gene>
    <name evidence="1" type="primary">glpK</name>
</gene>
<evidence type="ECO:0000255" key="1">
    <source>
        <dbReference type="HAMAP-Rule" id="MF_00186"/>
    </source>
</evidence>
<proteinExistence type="inferred from homology"/>
<reference key="1">
    <citation type="journal article" date="2000" name="Extremophiles">
        <title>The structure of the alpha-galactosidase gene loci in Thermus brockianus ITI360 and Thermus thermophilus TH125.</title>
        <authorList>
            <person name="Fridjonsson O."/>
            <person name="Watzlawick H."/>
            <person name="Mattes R."/>
        </authorList>
    </citation>
    <scope>NUCLEOTIDE SEQUENCE [GENOMIC DNA]</scope>
    <source>
        <strain>ITI360</strain>
    </source>
</reference>